<evidence type="ECO:0000255" key="1">
    <source>
        <dbReference type="HAMAP-Rule" id="MF_00145"/>
    </source>
</evidence>
<comment type="catalytic activity">
    <reaction evidence="1">
        <text>(2R)-3-phosphoglycerate + ATP = (2R)-3-phospho-glyceroyl phosphate + ADP</text>
        <dbReference type="Rhea" id="RHEA:14801"/>
        <dbReference type="ChEBI" id="CHEBI:30616"/>
        <dbReference type="ChEBI" id="CHEBI:57604"/>
        <dbReference type="ChEBI" id="CHEBI:58272"/>
        <dbReference type="ChEBI" id="CHEBI:456216"/>
        <dbReference type="EC" id="2.7.2.3"/>
    </reaction>
</comment>
<comment type="pathway">
    <text evidence="1">Carbohydrate degradation; glycolysis; pyruvate from D-glyceraldehyde 3-phosphate: step 2/5.</text>
</comment>
<comment type="subunit">
    <text evidence="1">Monomer.</text>
</comment>
<comment type="subcellular location">
    <subcellularLocation>
        <location evidence="1">Cytoplasm</location>
    </subcellularLocation>
</comment>
<comment type="similarity">
    <text evidence="1">Belongs to the phosphoglycerate kinase family.</text>
</comment>
<keyword id="KW-0067">ATP-binding</keyword>
<keyword id="KW-0963">Cytoplasm</keyword>
<keyword id="KW-0324">Glycolysis</keyword>
<keyword id="KW-0418">Kinase</keyword>
<keyword id="KW-0547">Nucleotide-binding</keyword>
<keyword id="KW-1185">Reference proteome</keyword>
<keyword id="KW-0808">Transferase</keyword>
<name>PGK_BLOFL</name>
<dbReference type="EC" id="2.7.2.3" evidence="1"/>
<dbReference type="EMBL" id="BX248583">
    <property type="protein sequence ID" value="CAD83325.1"/>
    <property type="molecule type" value="Genomic_DNA"/>
</dbReference>
<dbReference type="SMR" id="Q7VRG3"/>
<dbReference type="STRING" id="203907.Bfl254"/>
<dbReference type="KEGG" id="bfl:Bfl254"/>
<dbReference type="eggNOG" id="COG0126">
    <property type="taxonomic scope" value="Bacteria"/>
</dbReference>
<dbReference type="HOGENOM" id="CLU_025427_0_2_6"/>
<dbReference type="OrthoDB" id="9808460at2"/>
<dbReference type="UniPathway" id="UPA00109">
    <property type="reaction ID" value="UER00185"/>
</dbReference>
<dbReference type="Proteomes" id="UP000002192">
    <property type="component" value="Chromosome"/>
</dbReference>
<dbReference type="GO" id="GO:0005829">
    <property type="term" value="C:cytosol"/>
    <property type="evidence" value="ECO:0007669"/>
    <property type="project" value="TreeGrafter"/>
</dbReference>
<dbReference type="GO" id="GO:0043531">
    <property type="term" value="F:ADP binding"/>
    <property type="evidence" value="ECO:0007669"/>
    <property type="project" value="TreeGrafter"/>
</dbReference>
<dbReference type="GO" id="GO:0005524">
    <property type="term" value="F:ATP binding"/>
    <property type="evidence" value="ECO:0007669"/>
    <property type="project" value="UniProtKB-KW"/>
</dbReference>
<dbReference type="GO" id="GO:0004618">
    <property type="term" value="F:phosphoglycerate kinase activity"/>
    <property type="evidence" value="ECO:0007669"/>
    <property type="project" value="UniProtKB-UniRule"/>
</dbReference>
<dbReference type="GO" id="GO:0006094">
    <property type="term" value="P:gluconeogenesis"/>
    <property type="evidence" value="ECO:0007669"/>
    <property type="project" value="TreeGrafter"/>
</dbReference>
<dbReference type="GO" id="GO:0006096">
    <property type="term" value="P:glycolytic process"/>
    <property type="evidence" value="ECO:0007669"/>
    <property type="project" value="UniProtKB-UniRule"/>
</dbReference>
<dbReference type="FunFam" id="3.40.50.1260:FF:000001">
    <property type="entry name" value="Phosphoglycerate kinase"/>
    <property type="match status" value="1"/>
</dbReference>
<dbReference type="FunFam" id="3.40.50.1260:FF:000002">
    <property type="entry name" value="Phosphoglycerate kinase"/>
    <property type="match status" value="1"/>
</dbReference>
<dbReference type="Gene3D" id="3.40.50.1260">
    <property type="entry name" value="Phosphoglycerate kinase, N-terminal domain"/>
    <property type="match status" value="2"/>
</dbReference>
<dbReference type="HAMAP" id="MF_00145">
    <property type="entry name" value="Phosphoglyc_kinase"/>
    <property type="match status" value="1"/>
</dbReference>
<dbReference type="InterPro" id="IPR001576">
    <property type="entry name" value="Phosphoglycerate_kinase"/>
</dbReference>
<dbReference type="InterPro" id="IPR015824">
    <property type="entry name" value="Phosphoglycerate_kinase_N"/>
</dbReference>
<dbReference type="InterPro" id="IPR036043">
    <property type="entry name" value="Phosphoglycerate_kinase_sf"/>
</dbReference>
<dbReference type="PANTHER" id="PTHR11406">
    <property type="entry name" value="PHOSPHOGLYCERATE KINASE"/>
    <property type="match status" value="1"/>
</dbReference>
<dbReference type="PANTHER" id="PTHR11406:SF23">
    <property type="entry name" value="PHOSPHOGLYCERATE KINASE 1, CHLOROPLASTIC-RELATED"/>
    <property type="match status" value="1"/>
</dbReference>
<dbReference type="Pfam" id="PF00162">
    <property type="entry name" value="PGK"/>
    <property type="match status" value="1"/>
</dbReference>
<dbReference type="PIRSF" id="PIRSF000724">
    <property type="entry name" value="Pgk"/>
    <property type="match status" value="1"/>
</dbReference>
<dbReference type="PRINTS" id="PR00477">
    <property type="entry name" value="PHGLYCKINASE"/>
</dbReference>
<dbReference type="SUPFAM" id="SSF53748">
    <property type="entry name" value="Phosphoglycerate kinase"/>
    <property type="match status" value="1"/>
</dbReference>
<organism>
    <name type="scientific">Blochmanniella floridana</name>
    <dbReference type="NCBI Taxonomy" id="203907"/>
    <lineage>
        <taxon>Bacteria</taxon>
        <taxon>Pseudomonadati</taxon>
        <taxon>Pseudomonadota</taxon>
        <taxon>Gammaproteobacteria</taxon>
        <taxon>Enterobacterales</taxon>
        <taxon>Enterobacteriaceae</taxon>
        <taxon>ant endosymbionts</taxon>
        <taxon>Candidatus Blochmanniella</taxon>
    </lineage>
</organism>
<gene>
    <name evidence="1" type="primary">pgk</name>
    <name type="ordered locus">Bfl254</name>
</gene>
<protein>
    <recommendedName>
        <fullName evidence="1">Phosphoglycerate kinase</fullName>
        <ecNumber evidence="1">2.7.2.3</ecNumber>
    </recommendedName>
</protein>
<sequence length="400" mass="43734">MVMIKMSDVDLFNKRILIRADLNVPIRNGIITSARRIHASLPTIQLALSRSNQVMVTSHLGRPVEGEYDSQFSLQPVVDYFQKNLSAKIGGVRLVKDYLDGINWISNELLILENVRFNKGEKTDDEVLAKKYASLCDVFVMDAFGSAHRIQSSTHNVSKFVKVACSGLLLEQEIAALHKALSNPVRPMVAIVGGSKVSSKLMVLESLSKVVDYLIVGGGIANTFLAAQGQNVGKSLYEAELISTAKSLLKDCNIPIPTDVRVSSEFSETAQSIMKNVTEIKDDEQILDLGDNSIINILNILNNAKTILWNGPVGVFEFPNFRKGTEMVSNAIANSNAFSIAGGGDTLMAIDLFGIANQISYVSTGGGAFLEFIEGKTLPSIEVLEEHKRMRNGNYSDINY</sequence>
<proteinExistence type="inferred from homology"/>
<reference key="1">
    <citation type="journal article" date="2003" name="Proc. Natl. Acad. Sci. U.S.A.">
        <title>The genome sequence of Blochmannia floridanus: comparative analysis of reduced genomes.</title>
        <authorList>
            <person name="Gil R."/>
            <person name="Silva F.J."/>
            <person name="Zientz E."/>
            <person name="Delmotte F."/>
            <person name="Gonzalez-Candelas F."/>
            <person name="Latorre A."/>
            <person name="Rausell C."/>
            <person name="Kamerbeek J."/>
            <person name="Gadau J."/>
            <person name="Hoelldobler B."/>
            <person name="van Ham R.C.H.J."/>
            <person name="Gross R."/>
            <person name="Moya A."/>
        </authorList>
    </citation>
    <scope>NUCLEOTIDE SEQUENCE [LARGE SCALE GENOMIC DNA]</scope>
</reference>
<accession>Q7VRG3</accession>
<feature type="chain" id="PRO_0000145923" description="Phosphoglycerate kinase">
    <location>
        <begin position="1"/>
        <end position="400"/>
    </location>
</feature>
<feature type="binding site" evidence="1">
    <location>
        <begin position="21"/>
        <end position="23"/>
    </location>
    <ligand>
        <name>substrate</name>
    </ligand>
</feature>
<feature type="binding site" evidence="1">
    <location>
        <position position="36"/>
    </location>
    <ligand>
        <name>substrate</name>
    </ligand>
</feature>
<feature type="binding site" evidence="1">
    <location>
        <begin position="59"/>
        <end position="62"/>
    </location>
    <ligand>
        <name>substrate</name>
    </ligand>
</feature>
<feature type="binding site" evidence="1">
    <location>
        <position position="116"/>
    </location>
    <ligand>
        <name>substrate</name>
    </ligand>
</feature>
<feature type="binding site" evidence="1">
    <location>
        <position position="149"/>
    </location>
    <ligand>
        <name>substrate</name>
    </ligand>
</feature>
<feature type="binding site" evidence="1">
    <location>
        <position position="200"/>
    </location>
    <ligand>
        <name>ATP</name>
        <dbReference type="ChEBI" id="CHEBI:30616"/>
    </ligand>
</feature>
<feature type="binding site" evidence="1">
    <location>
        <position position="317"/>
    </location>
    <ligand>
        <name>ATP</name>
        <dbReference type="ChEBI" id="CHEBI:30616"/>
    </ligand>
</feature>
<feature type="binding site" evidence="1">
    <location>
        <begin position="343"/>
        <end position="346"/>
    </location>
    <ligand>
        <name>ATP</name>
        <dbReference type="ChEBI" id="CHEBI:30616"/>
    </ligand>
</feature>